<feature type="chain" id="PRO_1000051003" description="Small ribosomal subunit protein uS19">
    <location>
        <begin position="1"/>
        <end position="93"/>
    </location>
</feature>
<sequence length="93" mass="10651">MPRSLKKGPFVDDHLLKKVEAQNARGTKNVIKTWSRRSMIVPEMIGHTIAVHDGRKHVPVFITEAMIGHKLGEFAPTRTFRGHVKEDRRSRRG</sequence>
<accession>A0LRM4</accession>
<name>RS19_ACIC1</name>
<protein>
    <recommendedName>
        <fullName evidence="1">Small ribosomal subunit protein uS19</fullName>
    </recommendedName>
    <alternativeName>
        <fullName evidence="2">30S ribosomal protein S19</fullName>
    </alternativeName>
</protein>
<keyword id="KW-1185">Reference proteome</keyword>
<keyword id="KW-0687">Ribonucleoprotein</keyword>
<keyword id="KW-0689">Ribosomal protein</keyword>
<keyword id="KW-0694">RNA-binding</keyword>
<keyword id="KW-0699">rRNA-binding</keyword>
<organism>
    <name type="scientific">Acidothermus cellulolyticus (strain ATCC 43068 / DSM 8971 / 11B)</name>
    <dbReference type="NCBI Taxonomy" id="351607"/>
    <lineage>
        <taxon>Bacteria</taxon>
        <taxon>Bacillati</taxon>
        <taxon>Actinomycetota</taxon>
        <taxon>Actinomycetes</taxon>
        <taxon>Acidothermales</taxon>
        <taxon>Acidothermaceae</taxon>
        <taxon>Acidothermus</taxon>
    </lineage>
</organism>
<comment type="function">
    <text evidence="1">Protein S19 forms a complex with S13 that binds strongly to the 16S ribosomal RNA.</text>
</comment>
<comment type="similarity">
    <text evidence="1">Belongs to the universal ribosomal protein uS19 family.</text>
</comment>
<evidence type="ECO:0000255" key="1">
    <source>
        <dbReference type="HAMAP-Rule" id="MF_00531"/>
    </source>
</evidence>
<evidence type="ECO:0000305" key="2"/>
<reference key="1">
    <citation type="journal article" date="2009" name="Genome Res.">
        <title>Complete genome of the cellulolytic thermophile Acidothermus cellulolyticus 11B provides insights into its ecophysiological and evolutionary adaptations.</title>
        <authorList>
            <person name="Barabote R.D."/>
            <person name="Xie G."/>
            <person name="Leu D.H."/>
            <person name="Normand P."/>
            <person name="Necsulea A."/>
            <person name="Daubin V."/>
            <person name="Medigue C."/>
            <person name="Adney W.S."/>
            <person name="Xu X.C."/>
            <person name="Lapidus A."/>
            <person name="Parales R.E."/>
            <person name="Detter C."/>
            <person name="Pujic P."/>
            <person name="Bruce D."/>
            <person name="Lavire C."/>
            <person name="Challacombe J.F."/>
            <person name="Brettin T.S."/>
            <person name="Berry A.M."/>
        </authorList>
    </citation>
    <scope>NUCLEOTIDE SEQUENCE [LARGE SCALE GENOMIC DNA]</scope>
    <source>
        <strain>ATCC 43068 / DSM 8971 / 11B</strain>
    </source>
</reference>
<proteinExistence type="inferred from homology"/>
<gene>
    <name evidence="1" type="primary">rpsS</name>
    <name type="ordered locus">Acel_0310</name>
</gene>
<dbReference type="EMBL" id="CP000481">
    <property type="protein sequence ID" value="ABK52084.1"/>
    <property type="molecule type" value="Genomic_DNA"/>
</dbReference>
<dbReference type="RefSeq" id="WP_011719147.1">
    <property type="nucleotide sequence ID" value="NC_008578.1"/>
</dbReference>
<dbReference type="SMR" id="A0LRM4"/>
<dbReference type="FunCoup" id="A0LRM4">
    <property type="interactions" value="133"/>
</dbReference>
<dbReference type="STRING" id="351607.Acel_0310"/>
<dbReference type="KEGG" id="ace:Acel_0310"/>
<dbReference type="eggNOG" id="COG0185">
    <property type="taxonomic scope" value="Bacteria"/>
</dbReference>
<dbReference type="HOGENOM" id="CLU_144911_0_1_11"/>
<dbReference type="InParanoid" id="A0LRM4"/>
<dbReference type="OrthoDB" id="9797833at2"/>
<dbReference type="Proteomes" id="UP000008221">
    <property type="component" value="Chromosome"/>
</dbReference>
<dbReference type="GO" id="GO:0005737">
    <property type="term" value="C:cytoplasm"/>
    <property type="evidence" value="ECO:0007669"/>
    <property type="project" value="UniProtKB-ARBA"/>
</dbReference>
<dbReference type="GO" id="GO:0015935">
    <property type="term" value="C:small ribosomal subunit"/>
    <property type="evidence" value="ECO:0007669"/>
    <property type="project" value="InterPro"/>
</dbReference>
<dbReference type="GO" id="GO:0019843">
    <property type="term" value="F:rRNA binding"/>
    <property type="evidence" value="ECO:0007669"/>
    <property type="project" value="UniProtKB-UniRule"/>
</dbReference>
<dbReference type="GO" id="GO:0003735">
    <property type="term" value="F:structural constituent of ribosome"/>
    <property type="evidence" value="ECO:0007669"/>
    <property type="project" value="InterPro"/>
</dbReference>
<dbReference type="GO" id="GO:0000028">
    <property type="term" value="P:ribosomal small subunit assembly"/>
    <property type="evidence" value="ECO:0007669"/>
    <property type="project" value="TreeGrafter"/>
</dbReference>
<dbReference type="GO" id="GO:0006412">
    <property type="term" value="P:translation"/>
    <property type="evidence" value="ECO:0007669"/>
    <property type="project" value="UniProtKB-UniRule"/>
</dbReference>
<dbReference type="FunFam" id="3.30.860.10:FF:000001">
    <property type="entry name" value="30S ribosomal protein S19"/>
    <property type="match status" value="1"/>
</dbReference>
<dbReference type="Gene3D" id="3.30.860.10">
    <property type="entry name" value="30s Ribosomal Protein S19, Chain A"/>
    <property type="match status" value="1"/>
</dbReference>
<dbReference type="HAMAP" id="MF_00531">
    <property type="entry name" value="Ribosomal_uS19"/>
    <property type="match status" value="1"/>
</dbReference>
<dbReference type="InterPro" id="IPR002222">
    <property type="entry name" value="Ribosomal_uS19"/>
</dbReference>
<dbReference type="InterPro" id="IPR005732">
    <property type="entry name" value="Ribosomal_uS19_bac-type"/>
</dbReference>
<dbReference type="InterPro" id="IPR020934">
    <property type="entry name" value="Ribosomal_uS19_CS"/>
</dbReference>
<dbReference type="InterPro" id="IPR023575">
    <property type="entry name" value="Ribosomal_uS19_SF"/>
</dbReference>
<dbReference type="NCBIfam" id="TIGR01050">
    <property type="entry name" value="rpsS_bact"/>
    <property type="match status" value="1"/>
</dbReference>
<dbReference type="PANTHER" id="PTHR11880">
    <property type="entry name" value="RIBOSOMAL PROTEIN S19P FAMILY MEMBER"/>
    <property type="match status" value="1"/>
</dbReference>
<dbReference type="PANTHER" id="PTHR11880:SF8">
    <property type="entry name" value="SMALL RIBOSOMAL SUBUNIT PROTEIN US19M"/>
    <property type="match status" value="1"/>
</dbReference>
<dbReference type="Pfam" id="PF00203">
    <property type="entry name" value="Ribosomal_S19"/>
    <property type="match status" value="1"/>
</dbReference>
<dbReference type="PIRSF" id="PIRSF002144">
    <property type="entry name" value="Ribosomal_S19"/>
    <property type="match status" value="1"/>
</dbReference>
<dbReference type="PRINTS" id="PR00975">
    <property type="entry name" value="RIBOSOMALS19"/>
</dbReference>
<dbReference type="SUPFAM" id="SSF54570">
    <property type="entry name" value="Ribosomal protein S19"/>
    <property type="match status" value="1"/>
</dbReference>
<dbReference type="PROSITE" id="PS00323">
    <property type="entry name" value="RIBOSOMAL_S19"/>
    <property type="match status" value="1"/>
</dbReference>